<sequence>MTTNYIFVTGGVVSSLGKGIAAASLAAILEARGLNVTIMKLDPYINVDPGTMSPTQHGEVFVTEDGAETDLDLGHYERFIRTKMTRRNNFTTGRIYSEVLRKERRGDYLGATIQVIPHITNAIKERIIEGGEGHDVVLVEIGGTVGDIESLPFLEAIRQMAVDVGREHTLYMHLTLVPYLAAAGEVKTKPTQHSVKELLSIGIQPDVLICRSDRAVPANERAKIALFCNVPEKAVISLKDVDSIYKIPGLLKSQGLDDYICKRFSLTCPEANLAEWEQVLYEESNPGGEVTIGMIGKYVELPDAYKSVIEALKHGGLKNRLTVNIKLIDSQDVETRGEEMLKGLDAILIPGGFGYRGVEGKVLAARYAREHNIPYLGICLGMQVALMEFARNVAGMENANSTEFVPDCKYPVVALITEWRDEDGNVEVRTEESDLGGTMRVGGQQCHLTEGSLVRQMYGEPTIVERHRHRYEVNNMLLKQIEAAGLRVAGRSADNKLVEIIELPNHPWFVACQFHPEFTSTPRDGHPLFAGFVKAAGEYQKRQVK</sequence>
<feature type="chain" id="PRO_1000139606" description="CTP synthase">
    <location>
        <begin position="1"/>
        <end position="545"/>
    </location>
</feature>
<feature type="domain" description="Glutamine amidotransferase type-1" evidence="1">
    <location>
        <begin position="291"/>
        <end position="542"/>
    </location>
</feature>
<feature type="region of interest" description="Amidoligase domain" evidence="1">
    <location>
        <begin position="1"/>
        <end position="266"/>
    </location>
</feature>
<feature type="active site" description="Nucleophile; for glutamine hydrolysis" evidence="1">
    <location>
        <position position="379"/>
    </location>
</feature>
<feature type="active site" evidence="1">
    <location>
        <position position="515"/>
    </location>
</feature>
<feature type="active site" evidence="1">
    <location>
        <position position="517"/>
    </location>
</feature>
<feature type="binding site" evidence="1">
    <location>
        <position position="14"/>
    </location>
    <ligand>
        <name>CTP</name>
        <dbReference type="ChEBI" id="CHEBI:37563"/>
        <note>allosteric inhibitor</note>
    </ligand>
</feature>
<feature type="binding site" evidence="1">
    <location>
        <position position="14"/>
    </location>
    <ligand>
        <name>UTP</name>
        <dbReference type="ChEBI" id="CHEBI:46398"/>
    </ligand>
</feature>
<feature type="binding site" evidence="1">
    <location>
        <begin position="15"/>
        <end position="20"/>
    </location>
    <ligand>
        <name>ATP</name>
        <dbReference type="ChEBI" id="CHEBI:30616"/>
    </ligand>
</feature>
<feature type="binding site" evidence="1">
    <location>
        <position position="72"/>
    </location>
    <ligand>
        <name>ATP</name>
        <dbReference type="ChEBI" id="CHEBI:30616"/>
    </ligand>
</feature>
<feature type="binding site" evidence="1">
    <location>
        <position position="72"/>
    </location>
    <ligand>
        <name>Mg(2+)</name>
        <dbReference type="ChEBI" id="CHEBI:18420"/>
    </ligand>
</feature>
<feature type="binding site" evidence="1">
    <location>
        <position position="140"/>
    </location>
    <ligand>
        <name>Mg(2+)</name>
        <dbReference type="ChEBI" id="CHEBI:18420"/>
    </ligand>
</feature>
<feature type="binding site" evidence="1">
    <location>
        <begin position="147"/>
        <end position="149"/>
    </location>
    <ligand>
        <name>CTP</name>
        <dbReference type="ChEBI" id="CHEBI:37563"/>
        <note>allosteric inhibitor</note>
    </ligand>
</feature>
<feature type="binding site" evidence="1">
    <location>
        <begin position="187"/>
        <end position="192"/>
    </location>
    <ligand>
        <name>CTP</name>
        <dbReference type="ChEBI" id="CHEBI:37563"/>
        <note>allosteric inhibitor</note>
    </ligand>
</feature>
<feature type="binding site" evidence="1">
    <location>
        <begin position="187"/>
        <end position="192"/>
    </location>
    <ligand>
        <name>UTP</name>
        <dbReference type="ChEBI" id="CHEBI:46398"/>
    </ligand>
</feature>
<feature type="binding site" evidence="1">
    <location>
        <position position="223"/>
    </location>
    <ligand>
        <name>CTP</name>
        <dbReference type="ChEBI" id="CHEBI:37563"/>
        <note>allosteric inhibitor</note>
    </ligand>
</feature>
<feature type="binding site" evidence="1">
    <location>
        <position position="223"/>
    </location>
    <ligand>
        <name>UTP</name>
        <dbReference type="ChEBI" id="CHEBI:46398"/>
    </ligand>
</feature>
<feature type="binding site" evidence="1">
    <location>
        <begin position="239"/>
        <end position="241"/>
    </location>
    <ligand>
        <name>ATP</name>
        <dbReference type="ChEBI" id="CHEBI:30616"/>
    </ligand>
</feature>
<feature type="binding site" evidence="1">
    <location>
        <position position="352"/>
    </location>
    <ligand>
        <name>L-glutamine</name>
        <dbReference type="ChEBI" id="CHEBI:58359"/>
    </ligand>
</feature>
<feature type="binding site" evidence="1">
    <location>
        <begin position="380"/>
        <end position="383"/>
    </location>
    <ligand>
        <name>L-glutamine</name>
        <dbReference type="ChEBI" id="CHEBI:58359"/>
    </ligand>
</feature>
<feature type="binding site" evidence="1">
    <location>
        <position position="403"/>
    </location>
    <ligand>
        <name>L-glutamine</name>
        <dbReference type="ChEBI" id="CHEBI:58359"/>
    </ligand>
</feature>
<feature type="binding site" evidence="1">
    <location>
        <position position="470"/>
    </location>
    <ligand>
        <name>L-glutamine</name>
        <dbReference type="ChEBI" id="CHEBI:58359"/>
    </ligand>
</feature>
<reference key="1">
    <citation type="journal article" date="2006" name="PLoS Genet.">
        <title>The complete genome sequence and comparative genome analysis of the high pathogenicity Yersinia enterocolitica strain 8081.</title>
        <authorList>
            <person name="Thomson N.R."/>
            <person name="Howard S."/>
            <person name="Wren B.W."/>
            <person name="Holden M.T.G."/>
            <person name="Crossman L."/>
            <person name="Challis G.L."/>
            <person name="Churcher C."/>
            <person name="Mungall K."/>
            <person name="Brooks K."/>
            <person name="Chillingworth T."/>
            <person name="Feltwell T."/>
            <person name="Abdellah Z."/>
            <person name="Hauser H."/>
            <person name="Jagels K."/>
            <person name="Maddison M."/>
            <person name="Moule S."/>
            <person name="Sanders M."/>
            <person name="Whitehead S."/>
            <person name="Quail M.A."/>
            <person name="Dougan G."/>
            <person name="Parkhill J."/>
            <person name="Prentice M.B."/>
        </authorList>
    </citation>
    <scope>NUCLEOTIDE SEQUENCE [LARGE SCALE GENOMIC DNA]</scope>
    <source>
        <strain>NCTC 13174 / 8081</strain>
    </source>
</reference>
<proteinExistence type="inferred from homology"/>
<evidence type="ECO:0000255" key="1">
    <source>
        <dbReference type="HAMAP-Rule" id="MF_01227"/>
    </source>
</evidence>
<protein>
    <recommendedName>
        <fullName evidence="1">CTP synthase</fullName>
        <ecNumber evidence="1">6.3.4.2</ecNumber>
    </recommendedName>
    <alternativeName>
        <fullName evidence="1">Cytidine 5'-triphosphate synthase</fullName>
    </alternativeName>
    <alternativeName>
        <fullName evidence="1">Cytidine triphosphate synthetase</fullName>
        <shortName evidence="1">CTP synthetase</shortName>
        <shortName evidence="1">CTPS</shortName>
    </alternativeName>
    <alternativeName>
        <fullName evidence="1">UTP--ammonia ligase</fullName>
    </alternativeName>
</protein>
<accession>A1JJR3</accession>
<gene>
    <name evidence="1" type="primary">pyrG</name>
    <name type="ordered locus">YE0746</name>
</gene>
<dbReference type="EC" id="6.3.4.2" evidence="1"/>
<dbReference type="EMBL" id="AM286415">
    <property type="protein sequence ID" value="CAL10850.1"/>
    <property type="molecule type" value="Genomic_DNA"/>
</dbReference>
<dbReference type="RefSeq" id="WP_005167247.1">
    <property type="nucleotide sequence ID" value="NC_008800.1"/>
</dbReference>
<dbReference type="RefSeq" id="YP_001005090.1">
    <property type="nucleotide sequence ID" value="NC_008800.1"/>
</dbReference>
<dbReference type="SMR" id="A1JJR3"/>
<dbReference type="MEROPS" id="C26.964"/>
<dbReference type="GeneID" id="93970999"/>
<dbReference type="KEGG" id="yen:YE0746"/>
<dbReference type="PATRIC" id="fig|393305.7.peg.841"/>
<dbReference type="eggNOG" id="COG0504">
    <property type="taxonomic scope" value="Bacteria"/>
</dbReference>
<dbReference type="HOGENOM" id="CLU_011675_5_0_6"/>
<dbReference type="OrthoDB" id="9801107at2"/>
<dbReference type="UniPathway" id="UPA00159">
    <property type="reaction ID" value="UER00277"/>
</dbReference>
<dbReference type="Proteomes" id="UP000000642">
    <property type="component" value="Chromosome"/>
</dbReference>
<dbReference type="GO" id="GO:0005829">
    <property type="term" value="C:cytosol"/>
    <property type="evidence" value="ECO:0007669"/>
    <property type="project" value="TreeGrafter"/>
</dbReference>
<dbReference type="GO" id="GO:0005524">
    <property type="term" value="F:ATP binding"/>
    <property type="evidence" value="ECO:0007669"/>
    <property type="project" value="UniProtKB-KW"/>
</dbReference>
<dbReference type="GO" id="GO:0003883">
    <property type="term" value="F:CTP synthase activity"/>
    <property type="evidence" value="ECO:0007669"/>
    <property type="project" value="UniProtKB-UniRule"/>
</dbReference>
<dbReference type="GO" id="GO:0004359">
    <property type="term" value="F:glutaminase activity"/>
    <property type="evidence" value="ECO:0007669"/>
    <property type="project" value="RHEA"/>
</dbReference>
<dbReference type="GO" id="GO:0042802">
    <property type="term" value="F:identical protein binding"/>
    <property type="evidence" value="ECO:0007669"/>
    <property type="project" value="TreeGrafter"/>
</dbReference>
<dbReference type="GO" id="GO:0046872">
    <property type="term" value="F:metal ion binding"/>
    <property type="evidence" value="ECO:0007669"/>
    <property type="project" value="UniProtKB-KW"/>
</dbReference>
<dbReference type="GO" id="GO:0044210">
    <property type="term" value="P:'de novo' CTP biosynthetic process"/>
    <property type="evidence" value="ECO:0007669"/>
    <property type="project" value="UniProtKB-UniRule"/>
</dbReference>
<dbReference type="GO" id="GO:0019856">
    <property type="term" value="P:pyrimidine nucleobase biosynthetic process"/>
    <property type="evidence" value="ECO:0007669"/>
    <property type="project" value="TreeGrafter"/>
</dbReference>
<dbReference type="CDD" id="cd03113">
    <property type="entry name" value="CTPS_N"/>
    <property type="match status" value="1"/>
</dbReference>
<dbReference type="CDD" id="cd01746">
    <property type="entry name" value="GATase1_CTP_Synthase"/>
    <property type="match status" value="1"/>
</dbReference>
<dbReference type="FunFam" id="3.40.50.300:FF:000009">
    <property type="entry name" value="CTP synthase"/>
    <property type="match status" value="1"/>
</dbReference>
<dbReference type="FunFam" id="3.40.50.880:FF:000002">
    <property type="entry name" value="CTP synthase"/>
    <property type="match status" value="1"/>
</dbReference>
<dbReference type="Gene3D" id="3.40.50.880">
    <property type="match status" value="1"/>
</dbReference>
<dbReference type="Gene3D" id="3.40.50.300">
    <property type="entry name" value="P-loop containing nucleotide triphosphate hydrolases"/>
    <property type="match status" value="1"/>
</dbReference>
<dbReference type="HAMAP" id="MF_01227">
    <property type="entry name" value="PyrG"/>
    <property type="match status" value="1"/>
</dbReference>
<dbReference type="InterPro" id="IPR029062">
    <property type="entry name" value="Class_I_gatase-like"/>
</dbReference>
<dbReference type="InterPro" id="IPR004468">
    <property type="entry name" value="CTP_synthase"/>
</dbReference>
<dbReference type="InterPro" id="IPR017456">
    <property type="entry name" value="CTP_synthase_N"/>
</dbReference>
<dbReference type="InterPro" id="IPR017926">
    <property type="entry name" value="GATASE"/>
</dbReference>
<dbReference type="InterPro" id="IPR033828">
    <property type="entry name" value="GATase1_CTP_Synthase"/>
</dbReference>
<dbReference type="InterPro" id="IPR027417">
    <property type="entry name" value="P-loop_NTPase"/>
</dbReference>
<dbReference type="NCBIfam" id="NF003792">
    <property type="entry name" value="PRK05380.1"/>
    <property type="match status" value="1"/>
</dbReference>
<dbReference type="NCBIfam" id="TIGR00337">
    <property type="entry name" value="PyrG"/>
    <property type="match status" value="1"/>
</dbReference>
<dbReference type="PANTHER" id="PTHR11550">
    <property type="entry name" value="CTP SYNTHASE"/>
    <property type="match status" value="1"/>
</dbReference>
<dbReference type="PANTHER" id="PTHR11550:SF0">
    <property type="entry name" value="CTP SYNTHASE-RELATED"/>
    <property type="match status" value="1"/>
</dbReference>
<dbReference type="Pfam" id="PF06418">
    <property type="entry name" value="CTP_synth_N"/>
    <property type="match status" value="1"/>
</dbReference>
<dbReference type="Pfam" id="PF00117">
    <property type="entry name" value="GATase"/>
    <property type="match status" value="1"/>
</dbReference>
<dbReference type="SUPFAM" id="SSF52317">
    <property type="entry name" value="Class I glutamine amidotransferase-like"/>
    <property type="match status" value="1"/>
</dbReference>
<dbReference type="SUPFAM" id="SSF52540">
    <property type="entry name" value="P-loop containing nucleoside triphosphate hydrolases"/>
    <property type="match status" value="1"/>
</dbReference>
<dbReference type="PROSITE" id="PS51273">
    <property type="entry name" value="GATASE_TYPE_1"/>
    <property type="match status" value="1"/>
</dbReference>
<organism>
    <name type="scientific">Yersinia enterocolitica serotype O:8 / biotype 1B (strain NCTC 13174 / 8081)</name>
    <dbReference type="NCBI Taxonomy" id="393305"/>
    <lineage>
        <taxon>Bacteria</taxon>
        <taxon>Pseudomonadati</taxon>
        <taxon>Pseudomonadota</taxon>
        <taxon>Gammaproteobacteria</taxon>
        <taxon>Enterobacterales</taxon>
        <taxon>Yersiniaceae</taxon>
        <taxon>Yersinia</taxon>
    </lineage>
</organism>
<comment type="function">
    <text evidence="1">Catalyzes the ATP-dependent amination of UTP to CTP with either L-glutamine or ammonia as the source of nitrogen. Regulates intracellular CTP levels through interactions with the four ribonucleotide triphosphates.</text>
</comment>
<comment type="catalytic activity">
    <reaction evidence="1">
        <text>UTP + L-glutamine + ATP + H2O = CTP + L-glutamate + ADP + phosphate + 2 H(+)</text>
        <dbReference type="Rhea" id="RHEA:26426"/>
        <dbReference type="ChEBI" id="CHEBI:15377"/>
        <dbReference type="ChEBI" id="CHEBI:15378"/>
        <dbReference type="ChEBI" id="CHEBI:29985"/>
        <dbReference type="ChEBI" id="CHEBI:30616"/>
        <dbReference type="ChEBI" id="CHEBI:37563"/>
        <dbReference type="ChEBI" id="CHEBI:43474"/>
        <dbReference type="ChEBI" id="CHEBI:46398"/>
        <dbReference type="ChEBI" id="CHEBI:58359"/>
        <dbReference type="ChEBI" id="CHEBI:456216"/>
        <dbReference type="EC" id="6.3.4.2"/>
    </reaction>
</comment>
<comment type="catalytic activity">
    <reaction evidence="1">
        <text>L-glutamine + H2O = L-glutamate + NH4(+)</text>
        <dbReference type="Rhea" id="RHEA:15889"/>
        <dbReference type="ChEBI" id="CHEBI:15377"/>
        <dbReference type="ChEBI" id="CHEBI:28938"/>
        <dbReference type="ChEBI" id="CHEBI:29985"/>
        <dbReference type="ChEBI" id="CHEBI:58359"/>
    </reaction>
</comment>
<comment type="catalytic activity">
    <reaction evidence="1">
        <text>UTP + NH4(+) + ATP = CTP + ADP + phosphate + 2 H(+)</text>
        <dbReference type="Rhea" id="RHEA:16597"/>
        <dbReference type="ChEBI" id="CHEBI:15378"/>
        <dbReference type="ChEBI" id="CHEBI:28938"/>
        <dbReference type="ChEBI" id="CHEBI:30616"/>
        <dbReference type="ChEBI" id="CHEBI:37563"/>
        <dbReference type="ChEBI" id="CHEBI:43474"/>
        <dbReference type="ChEBI" id="CHEBI:46398"/>
        <dbReference type="ChEBI" id="CHEBI:456216"/>
    </reaction>
</comment>
<comment type="activity regulation">
    <text evidence="1">Allosterically activated by GTP, when glutamine is the substrate; GTP has no effect on the reaction when ammonia is the substrate. The allosteric effector GTP functions by stabilizing the protein conformation that binds the tetrahedral intermediate(s) formed during glutamine hydrolysis. Inhibited by the product CTP, via allosteric rather than competitive inhibition.</text>
</comment>
<comment type="pathway">
    <text evidence="1">Pyrimidine metabolism; CTP biosynthesis via de novo pathway; CTP from UDP: step 2/2.</text>
</comment>
<comment type="subunit">
    <text evidence="1">Homotetramer.</text>
</comment>
<comment type="miscellaneous">
    <text evidence="1">CTPSs have evolved a hybrid strategy for distinguishing between UTP and CTP. The overlapping regions of the product feedback inhibitory and substrate sites recognize a common feature in both compounds, the triphosphate moiety. To differentiate isosteric substrate and product pyrimidine rings, an additional pocket far from the expected kinase/ligase catalytic site, specifically recognizes the cytosine and ribose portions of the product inhibitor.</text>
</comment>
<comment type="similarity">
    <text evidence="1">Belongs to the CTP synthase family.</text>
</comment>
<keyword id="KW-0067">ATP-binding</keyword>
<keyword id="KW-0315">Glutamine amidotransferase</keyword>
<keyword id="KW-0436">Ligase</keyword>
<keyword id="KW-0460">Magnesium</keyword>
<keyword id="KW-0479">Metal-binding</keyword>
<keyword id="KW-0547">Nucleotide-binding</keyword>
<keyword id="KW-0665">Pyrimidine biosynthesis</keyword>
<name>PYRG_YERE8</name>